<sequence>MRRRIYEERGAVRQAGLAHVFEYQGGAAHTGAVQDSDWAVVMRGDIAITLVYAQPVSMPPVLPLPDFAFQACCSY</sequence>
<keyword id="KW-1185">Reference proteome</keyword>
<feature type="chain" id="PRO_0000202251" description="Uncharacterized protein TP_0420">
    <location>
        <begin position="1"/>
        <end position="75"/>
    </location>
</feature>
<accession>O83435</accession>
<organism>
    <name type="scientific">Treponema pallidum (strain Nichols)</name>
    <dbReference type="NCBI Taxonomy" id="243276"/>
    <lineage>
        <taxon>Bacteria</taxon>
        <taxon>Pseudomonadati</taxon>
        <taxon>Spirochaetota</taxon>
        <taxon>Spirochaetia</taxon>
        <taxon>Spirochaetales</taxon>
        <taxon>Treponemataceae</taxon>
        <taxon>Treponema</taxon>
    </lineage>
</organism>
<gene>
    <name type="ordered locus">TP_0420</name>
</gene>
<reference key="1">
    <citation type="journal article" date="1998" name="Science">
        <title>Complete genome sequence of Treponema pallidum, the syphilis spirochete.</title>
        <authorList>
            <person name="Fraser C.M."/>
            <person name="Norris S.J."/>
            <person name="Weinstock G.M."/>
            <person name="White O."/>
            <person name="Sutton G.G."/>
            <person name="Dodson R.J."/>
            <person name="Gwinn M.L."/>
            <person name="Hickey E.K."/>
            <person name="Clayton R.A."/>
            <person name="Ketchum K.A."/>
            <person name="Sodergren E."/>
            <person name="Hardham J.M."/>
            <person name="McLeod M.P."/>
            <person name="Salzberg S.L."/>
            <person name="Peterson J.D."/>
            <person name="Khalak H.G."/>
            <person name="Richardson D.L."/>
            <person name="Howell J.K."/>
            <person name="Chidambaram M."/>
            <person name="Utterback T.R."/>
            <person name="McDonald L.A."/>
            <person name="Artiach P."/>
            <person name="Bowman C."/>
            <person name="Cotton M.D."/>
            <person name="Fujii C."/>
            <person name="Garland S.A."/>
            <person name="Hatch B."/>
            <person name="Horst K."/>
            <person name="Roberts K.M."/>
            <person name="Sandusky M."/>
            <person name="Weidman J.F."/>
            <person name="Smith H.O."/>
            <person name="Venter J.C."/>
        </authorList>
    </citation>
    <scope>NUCLEOTIDE SEQUENCE [LARGE SCALE GENOMIC DNA]</scope>
    <source>
        <strain>Nichols</strain>
    </source>
</reference>
<protein>
    <recommendedName>
        <fullName>Uncharacterized protein TP_0420</fullName>
    </recommendedName>
</protein>
<dbReference type="EMBL" id="AE000520">
    <property type="protein sequence ID" value="AAC65408.1"/>
    <property type="molecule type" value="Genomic_DNA"/>
</dbReference>
<dbReference type="PIR" id="B71328">
    <property type="entry name" value="B71328"/>
</dbReference>
<dbReference type="RefSeq" id="WP_010881868.1">
    <property type="nucleotide sequence ID" value="NC_000919.1"/>
</dbReference>
<dbReference type="IntAct" id="O83435">
    <property type="interactions" value="1"/>
</dbReference>
<dbReference type="STRING" id="243276.TP_0420"/>
<dbReference type="EnsemblBacteria" id="AAC65408">
    <property type="protein sequence ID" value="AAC65408"/>
    <property type="gene ID" value="TP_0420"/>
</dbReference>
<dbReference type="KEGG" id="tpa:TP_0420"/>
<dbReference type="HOGENOM" id="CLU_2670013_0_0_12"/>
<dbReference type="Proteomes" id="UP000000811">
    <property type="component" value="Chromosome"/>
</dbReference>
<proteinExistence type="predicted"/>
<name>Y420_TREPA</name>